<reference key="1">
    <citation type="journal article" date="2001" name="Genes Dev.">
        <title>FHY1: a phytochrome A-specific signal transducer.</title>
        <authorList>
            <person name="Desnos T."/>
            <person name="Puente P."/>
            <person name="Whitelam G.C."/>
            <person name="Harberd N.P."/>
        </authorList>
    </citation>
    <scope>NUCLEOTIDE SEQUENCE [GENOMIC DNA]</scope>
    <scope>SUBCELLULAR LOCATION</scope>
    <scope>FUNCTION</scope>
    <scope>DISRUPTION PHENOTYPE</scope>
    <scope>INDUCTION BY FHY3 AND DARKNESS</scope>
    <scope>TISSUE SPECIFICITY</scope>
    <scope>NUCLEAR LOCALIZATION AND NUCLEAR EXPORT MOTIFS</scope>
    <source>
        <strain>cv. Landsberg erecta</strain>
    </source>
</reference>
<reference key="2">
    <citation type="journal article" date="2001" name="Plant Cell Physiol.">
        <title>The phytochrome A specific signaling component PAT3 is a positive regulator of Arabidopsis photomorphogenesis.</title>
        <authorList>
            <person name="Zeidler M."/>
            <person name="Bolle C."/>
            <person name="Chua N.H."/>
        </authorList>
    </citation>
    <scope>NUCLEOTIDE SEQUENCE [MRNA] (ISOFORM 1)</scope>
    <scope>FUNCTION</scope>
    <scope>DISRUPTION PHENOTYPE</scope>
    <scope>INDUCTION BY LIGHT</scope>
    <scope>DEVELOPMENTAL STAGE</scope>
    <scope>SUBCELLULAR LOCATION</scope>
    <scope>TISSUE SPECIFICITY</scope>
    <source>
        <strain>cv. Columbia</strain>
    </source>
</reference>
<reference key="3">
    <citation type="journal article" date="2010" name="Plant Cell">
        <title>Arabidopsis transcription factor ELONGATED HYPOCOTYL5 plays a role in the feedback regulation of phytochrome A signaling.</title>
        <authorList>
            <person name="Li J."/>
            <person name="Li G."/>
            <person name="Gao S."/>
            <person name="Martinez C."/>
            <person name="He G."/>
            <person name="Zhou Z."/>
            <person name="Huang X."/>
            <person name="Lee J.-H."/>
            <person name="Zhang H."/>
            <person name="Shen Y."/>
            <person name="Wang H."/>
            <person name="Deng X.W."/>
        </authorList>
    </citation>
    <scope>NUCLEOTIDE SEQUENCE [MRNA] (ISOFORMS 1; 2 AND 3)</scope>
    <scope>INDUCTION BY FAR-RED LIGHT</scope>
    <source>
        <strain>cv. Columbia</strain>
    </source>
</reference>
<reference key="4">
    <citation type="journal article" date="1999" name="Nature">
        <title>Sequence and analysis of chromosome 2 of the plant Arabidopsis thaliana.</title>
        <authorList>
            <person name="Lin X."/>
            <person name="Kaul S."/>
            <person name="Rounsley S.D."/>
            <person name="Shea T.P."/>
            <person name="Benito M.-I."/>
            <person name="Town C.D."/>
            <person name="Fujii C.Y."/>
            <person name="Mason T.M."/>
            <person name="Bowman C.L."/>
            <person name="Barnstead M.E."/>
            <person name="Feldblyum T.V."/>
            <person name="Buell C.R."/>
            <person name="Ketchum K.A."/>
            <person name="Lee J.J."/>
            <person name="Ronning C.M."/>
            <person name="Koo H.L."/>
            <person name="Moffat K.S."/>
            <person name="Cronin L.A."/>
            <person name="Shen M."/>
            <person name="Pai G."/>
            <person name="Van Aken S."/>
            <person name="Umayam L."/>
            <person name="Tallon L.J."/>
            <person name="Gill J.E."/>
            <person name="Adams M.D."/>
            <person name="Carrera A.J."/>
            <person name="Creasy T.H."/>
            <person name="Goodman H.M."/>
            <person name="Somerville C.R."/>
            <person name="Copenhaver G.P."/>
            <person name="Preuss D."/>
            <person name="Nierman W.C."/>
            <person name="White O."/>
            <person name="Eisen J.A."/>
            <person name="Salzberg S.L."/>
            <person name="Fraser C.M."/>
            <person name="Venter J.C."/>
        </authorList>
    </citation>
    <scope>NUCLEOTIDE SEQUENCE [LARGE SCALE GENOMIC DNA]</scope>
    <source>
        <strain>cv. Columbia</strain>
    </source>
</reference>
<reference key="5">
    <citation type="journal article" date="2017" name="Plant J.">
        <title>Araport11: a complete reannotation of the Arabidopsis thaliana reference genome.</title>
        <authorList>
            <person name="Cheng C.Y."/>
            <person name="Krishnakumar V."/>
            <person name="Chan A.P."/>
            <person name="Thibaud-Nissen F."/>
            <person name="Schobel S."/>
            <person name="Town C.D."/>
        </authorList>
    </citation>
    <scope>GENOME REANNOTATION</scope>
    <source>
        <strain>cv. Columbia</strain>
    </source>
</reference>
<reference key="6">
    <citation type="journal article" date="2003" name="Science">
        <title>Empirical analysis of transcriptional activity in the Arabidopsis genome.</title>
        <authorList>
            <person name="Yamada K."/>
            <person name="Lim J."/>
            <person name="Dale J.M."/>
            <person name="Chen H."/>
            <person name="Shinn P."/>
            <person name="Palm C.J."/>
            <person name="Southwick A.M."/>
            <person name="Wu H.C."/>
            <person name="Kim C.J."/>
            <person name="Nguyen M."/>
            <person name="Pham P.K."/>
            <person name="Cheuk R.F."/>
            <person name="Karlin-Newmann G."/>
            <person name="Liu S.X."/>
            <person name="Lam B."/>
            <person name="Sakano H."/>
            <person name="Wu T."/>
            <person name="Yu G."/>
            <person name="Miranda M."/>
            <person name="Quach H.L."/>
            <person name="Tripp M."/>
            <person name="Chang C.H."/>
            <person name="Lee J.M."/>
            <person name="Toriumi M.J."/>
            <person name="Chan M.M."/>
            <person name="Tang C.C."/>
            <person name="Onodera C.S."/>
            <person name="Deng J.M."/>
            <person name="Akiyama K."/>
            <person name="Ansari Y."/>
            <person name="Arakawa T."/>
            <person name="Banh J."/>
            <person name="Banno F."/>
            <person name="Bowser L."/>
            <person name="Brooks S.Y."/>
            <person name="Carninci P."/>
            <person name="Chao Q."/>
            <person name="Choy N."/>
            <person name="Enju A."/>
            <person name="Goldsmith A.D."/>
            <person name="Gurjal M."/>
            <person name="Hansen N.F."/>
            <person name="Hayashizaki Y."/>
            <person name="Johnson-Hopson C."/>
            <person name="Hsuan V.W."/>
            <person name="Iida K."/>
            <person name="Karnes M."/>
            <person name="Khan S."/>
            <person name="Koesema E."/>
            <person name="Ishida J."/>
            <person name="Jiang P.X."/>
            <person name="Jones T."/>
            <person name="Kawai J."/>
            <person name="Kamiya A."/>
            <person name="Meyers C."/>
            <person name="Nakajima M."/>
            <person name="Narusaka M."/>
            <person name="Seki M."/>
            <person name="Sakurai T."/>
            <person name="Satou M."/>
            <person name="Tamse R."/>
            <person name="Vaysberg M."/>
            <person name="Wallender E.K."/>
            <person name="Wong C."/>
            <person name="Yamamura Y."/>
            <person name="Yuan S."/>
            <person name="Shinozaki K."/>
            <person name="Davis R.W."/>
            <person name="Theologis A."/>
            <person name="Ecker J.R."/>
        </authorList>
    </citation>
    <scope>NUCLEOTIDE SEQUENCE [LARGE SCALE MRNA] (ISOFORM 1)</scope>
    <source>
        <strain>cv. Columbia</strain>
    </source>
</reference>
<reference key="7">
    <citation type="submission" date="2006-07" db="EMBL/GenBank/DDBJ databases">
        <title>Large-scale analysis of RIKEN Arabidopsis full-length (RAFL) cDNAs.</title>
        <authorList>
            <person name="Totoki Y."/>
            <person name="Seki M."/>
            <person name="Ishida J."/>
            <person name="Nakajima M."/>
            <person name="Enju A."/>
            <person name="Kamiya A."/>
            <person name="Narusaka M."/>
            <person name="Shin-i T."/>
            <person name="Nakagawa M."/>
            <person name="Sakamoto N."/>
            <person name="Oishi K."/>
            <person name="Kohara Y."/>
            <person name="Kobayashi M."/>
            <person name="Toyoda A."/>
            <person name="Sakaki Y."/>
            <person name="Sakurai T."/>
            <person name="Iida K."/>
            <person name="Akiyama K."/>
            <person name="Satou M."/>
            <person name="Toyoda T."/>
            <person name="Konagaya A."/>
            <person name="Carninci P."/>
            <person name="Kawai J."/>
            <person name="Hayashizaki Y."/>
            <person name="Shinozaki K."/>
        </authorList>
    </citation>
    <scope>NUCLEOTIDE SEQUENCE [LARGE SCALE MRNA] (ISOFORM 1)</scope>
    <source>
        <strain>cv. Columbia</strain>
    </source>
</reference>
<reference key="8">
    <citation type="journal article" date="1993" name="Plant Cell">
        <title>Phytochrome A null mutants of Arabidopsis display a wild-type phenotype in white light.</title>
        <authorList>
            <person name="Whitelam G.C."/>
            <person name="Johnson E."/>
            <person name="Peng J."/>
            <person name="Carol P."/>
            <person name="Anderson M.L."/>
            <person name="Cowl J.S."/>
            <person name="Harberd N.P."/>
        </authorList>
    </citation>
    <scope>FUNCTION</scope>
    <scope>DISRUPTION PHENOTYPE</scope>
</reference>
<reference key="9">
    <citation type="journal article" date="2004" name="Plant J.">
        <title>The nuclear localization signal and the C-terminal region of FHY1 are required for transmission of phytochrome A signals.</title>
        <authorList>
            <person name="Zeidler M."/>
            <person name="Zhou Q."/>
            <person name="Sarda X."/>
            <person name="Yau C.-P."/>
            <person name="Chua N.-H."/>
        </authorList>
    </citation>
    <scope>FUNCTION</scope>
    <scope>DISRUPTION PHENOTYPE</scope>
    <scope>NUCLEAR LOCALIZATION AND NUCLEAR EXPORT MOTIFS</scope>
    <scope>REGULATION BY FAR RED</scope>
    <source>
        <strain>cv. Columbia</strain>
    </source>
</reference>
<reference key="10">
    <citation type="journal article" date="2005" name="Plant J.">
        <title>FHL is required for full phytochrome A signaling and shares overlapping functions with FHY1.</title>
        <authorList>
            <person name="Zhou Q."/>
            <person name="Hare P.D."/>
            <person name="Yang S.W."/>
            <person name="Zeidler M."/>
            <person name="Huang L.-F."/>
            <person name="Chua N.-H."/>
        </authorList>
    </citation>
    <scope>FUNCTION</scope>
    <scope>DISRUPTION PHENOTYPE</scope>
    <scope>REPRESSION BY LIGHT</scope>
    <scope>INTERACTION WITH FHL</scope>
    <scope>HOMODIMERIZATION</scope>
    <scope>INDUCTION BY FHY3</scope>
</reference>
<reference key="11">
    <citation type="journal article" date="2005" name="Plant Physiol.">
        <title>Arabidopsis FHY1 protein stability is regulated by light via phytochrome A and 26S proteasome.</title>
        <authorList>
            <person name="Shen Y."/>
            <person name="Feng S."/>
            <person name="Ma L."/>
            <person name="Lin R."/>
            <person name="Qu L.-J."/>
            <person name="Chen Z."/>
            <person name="Wang H."/>
            <person name="Deng X.W."/>
        </authorList>
    </citation>
    <scope>DEVELOPMENTAL STAGE</scope>
    <scope>REGULATION BY LIGHT</scope>
    <source>
        <strain>cv. Landsberg erecta</strain>
    </source>
</reference>
<reference key="12">
    <citation type="journal article" date="2007" name="Proc. Natl. Acad. Sci. U.S.A.">
        <title>Arabidopsis fhl/fhy1 double mutant reveals a distinct cytoplasmic action of phytochrome A.</title>
        <authorList>
            <person name="Roesler J."/>
            <person name="Klein I."/>
            <person name="Zeidler M."/>
        </authorList>
    </citation>
    <scope>FUNCTION</scope>
    <scope>DISRUPTION PHENOTYPE</scope>
</reference>
<reference key="13">
    <citation type="journal article" date="2007" name="Science">
        <title>Transposase-derived transcription factors regulate light signaling in Arabidopsis.</title>
        <authorList>
            <person name="Lin R."/>
            <person name="Ding L."/>
            <person name="Casola C."/>
            <person name="Ripoll D.R."/>
            <person name="Feschotte C."/>
            <person name="Wang H."/>
        </authorList>
    </citation>
    <scope>REGULATION BY FAR-RED LIGHT</scope>
</reference>
<reference key="14">
    <citation type="journal article" date="2008" name="Mol. Cell">
        <title>Arabidopsis COP1/SPA1 complex and FHY1/FHY3 associate with distinct phosphorylated forms of phytochrome A in balancing light signaling.</title>
        <authorList>
            <person name="Saijo Y."/>
            <person name="Zhu D."/>
            <person name="Li J."/>
            <person name="Rubio V."/>
            <person name="Zhou Z."/>
            <person name="Shen Y."/>
            <person name="Hoecker U."/>
            <person name="Wang H."/>
            <person name="Deng X.W."/>
        </authorList>
    </citation>
    <scope>INTERACTION WITH PHYA</scope>
</reference>
<reference key="15">
    <citation type="journal article" date="2008" name="PLoS Genet.">
        <title>FHY1 mediates nuclear import of the light-activated phytochrome A photoreceptor.</title>
        <authorList>
            <person name="Genoud T."/>
            <person name="Schweizer F."/>
            <person name="Tscheuschler A."/>
            <person name="Debrieux D."/>
            <person name="Casal J.J."/>
            <person name="Schaefer E."/>
            <person name="Hiltbrunner A."/>
            <person name="Fankhauser C."/>
        </authorList>
    </citation>
    <scope>SUBCELLULAR LOCATION</scope>
    <scope>NUCLEAR LOCALIZATION MOTIF</scope>
</reference>
<reference key="16">
    <citation type="journal article" date="2009" name="Plant Cell">
        <title>Phytochrome A mediates rapid red light-induced phosphorylation of Arabidopsis FAR-RED ELONGATED HYPOCOTYL1 in a low fluence response.</title>
        <authorList>
            <person name="Shen Y."/>
            <person name="Zhou Z."/>
            <person name="Feng S."/>
            <person name="Li J."/>
            <person name="Tan-Wilson A."/>
            <person name="Qu L.J."/>
            <person name="Wang H."/>
            <person name="Deng X.W."/>
        </authorList>
    </citation>
    <scope>PHOSPHORYLATION BY PHYA</scope>
    <scope>INTERACTION WITH PHYA</scope>
    <scope>REGULATION BY RED LIGHT</scope>
</reference>
<reference key="17">
    <citation type="journal article" date="2009" name="Plant Cell">
        <title>FAR-RED ELONGATED HYPOCOTYL1 and FHY1-LIKE associate with the Arabidopsis transcription factors LAF1 and HFR1 to transmit phytochrome A signals for inhibition of hypocotyl elongation.</title>
        <authorList>
            <person name="Yang S.W."/>
            <person name="Jang I.-C."/>
            <person name="Henriques R."/>
            <person name="Chua N.-H."/>
        </authorList>
    </citation>
    <scope>FUNCTION</scope>
    <scope>DISRUPTION PHENOTYPE</scope>
    <scope>SUBCELLULAR LOCATION</scope>
    <scope>INTERACTION WITH PHYA; LAF1 AND HFR1</scope>
    <source>
        <strain>cv. Columbia</strain>
    </source>
</reference>
<reference key="18">
    <citation type="journal article" date="2009" name="Plant J.">
        <title>A cell-free system for light-dependent nuclear import of phytochrome.</title>
        <authorList>
            <person name="Pfeiffer A."/>
            <person name="Kunkel T."/>
            <person name="Hiltbrunner A."/>
            <person name="Neuhaus G."/>
            <person name="Wolf I."/>
            <person name="Speth V."/>
            <person name="Adam E."/>
            <person name="Nagy F."/>
            <person name="Schaefer E."/>
        </authorList>
    </citation>
    <scope>SUBCELLULAR LOCATION</scope>
</reference>
<reference key="19">
    <citation type="journal article" date="2011" name="Arabidopsis Book">
        <title>Phytochrome signaling mechanisms.</title>
        <authorList>
            <person name="Li J."/>
            <person name="Li G."/>
            <person name="Wang H."/>
            <person name="Deng X.W."/>
        </authorList>
    </citation>
    <scope>REVIEW</scope>
</reference>
<reference key="20">
    <citation type="journal article" date="2011" name="Cell">
        <title>Photoconversion and nuclear trafficking cycles determine phytochrome A's response profile to far-red light.</title>
        <authorList>
            <person name="Rausenberger J."/>
            <person name="Tscheuschler A."/>
            <person name="Nordmeier W."/>
            <person name="Wuest F."/>
            <person name="Timmer J."/>
            <person name="Schaefer E."/>
            <person name="Fleck C."/>
            <person name="Hiltbrunner A."/>
        </authorList>
    </citation>
    <scope>INTERACTION WITH PHYA</scope>
    <scope>SUBCELLULAR LOCATION</scope>
</reference>
<reference key="21">
    <citation type="journal article" date="2012" name="Plant Cell">
        <title>Nuclear phytochrome A signaling promotes phototropism in Arabidopsis.</title>
        <authorList>
            <person name="Kami C."/>
            <person name="Hersch M."/>
            <person name="Trevisan M."/>
            <person name="Genoud T."/>
            <person name="Hiltbrunner A."/>
            <person name="Bergmann S."/>
            <person name="Fankhauser C."/>
        </authorList>
    </citation>
    <scope>DISRUPTION PHENOTYPE</scope>
    <scope>FUNCTION</scope>
    <source>
        <strain>cv. Columbia</strain>
    </source>
</reference>
<reference key="22">
    <citation type="journal article" date="2012" name="Plant Cell">
        <title>Phosphorylation of FAR-RED ELONGATED HYPOCOTYL1 is a key mechanism defining signaling dynamics of phytochrome A under red and far-red light in Arabidopsis.</title>
        <authorList>
            <person name="Chen F."/>
            <person name="Shi X."/>
            <person name="Chen L."/>
            <person name="Dai M."/>
            <person name="Zhou Z."/>
            <person name="Shen Y."/>
            <person name="Li J."/>
            <person name="Li G."/>
            <person name="Wei N."/>
            <person name="Deng X.W."/>
        </authorList>
    </citation>
    <scope>FUNCTION</scope>
    <scope>DISRUPTION PHENOTYPE</scope>
    <scope>MUTAGENESIS OF SER-14; SER-39; SER-49 AND THR-61</scope>
    <scope>PHOSPHORYLATION AT SER-39 AND THR-61</scope>
    <scope>INDUCTION BY PHYA</scope>
    <scope>SUBCELLULAR LOCATION</scope>
    <source>
        <strain>cv. Landsberg erecta</strain>
    </source>
</reference>
<reference key="23">
    <citation type="journal article" date="2012" name="Plant Physiol.">
        <title>Missense mutation in the amino terminus of phytochrome A disrupts the nuclear import of the photoreceptor.</title>
        <authorList>
            <person name="Sokolova V."/>
            <person name="Bindics J."/>
            <person name="Kircher S."/>
            <person name="Adam E."/>
            <person name="Schaefer E."/>
            <person name="Nagy F."/>
            <person name="Viczian A."/>
        </authorList>
    </citation>
    <scope>INTERACTION WITH PHYA</scope>
</reference>
<reference key="24">
    <citation type="journal article" date="2014" name="Proc. Natl. Acad. Sci. U.S.A.">
        <title>Photoreceptor partner FHY1 has an independent role in gene modulation and plant development under far-red light.</title>
        <authorList>
            <person name="Chen F."/>
            <person name="Li B."/>
            <person name="Demone J."/>
            <person name="Charron J.-B."/>
            <person name="Shi X."/>
            <person name="Deng X.W."/>
        </authorList>
    </citation>
    <scope>FUNCTION</scope>
    <scope>DISRUPTION PHENOTYPE</scope>
    <source>
        <strain>cv. Landsberg erecta</strain>
    </source>
</reference>
<gene>
    <name evidence="20" type="primary">FHY1</name>
    <name evidence="21" type="synonym">PAT3</name>
    <name evidence="24" type="ordered locus">At2g37678</name>
    <name evidence="23" type="ORF">F13M22</name>
</gene>
<dbReference type="EMBL" id="AF432142">
    <property type="protein sequence ID" value="AAL35819.1"/>
    <property type="molecule type" value="Genomic_DNA"/>
</dbReference>
<dbReference type="EMBL" id="AF424739">
    <property type="protein sequence ID" value="AAL87850.1"/>
    <property type="molecule type" value="mRNA"/>
</dbReference>
<dbReference type="EMBL" id="HM029240">
    <property type="protein sequence ID" value="ADE60260.1"/>
    <property type="molecule type" value="mRNA"/>
</dbReference>
<dbReference type="EMBL" id="HM029241">
    <property type="protein sequence ID" value="ADE60261.1"/>
    <property type="molecule type" value="mRNA"/>
</dbReference>
<dbReference type="EMBL" id="HM029242">
    <property type="protein sequence ID" value="ADE60262.1"/>
    <property type="molecule type" value="mRNA"/>
</dbReference>
<dbReference type="EMBL" id="AC004684">
    <property type="protein sequence ID" value="AAC23638.1"/>
    <property type="status" value="ALT_SEQ"/>
    <property type="molecule type" value="Genomic_DNA"/>
</dbReference>
<dbReference type="EMBL" id="CP002685">
    <property type="protein sequence ID" value="AEC09433.1"/>
    <property type="molecule type" value="Genomic_DNA"/>
</dbReference>
<dbReference type="EMBL" id="CP002685">
    <property type="protein sequence ID" value="ANM61436.1"/>
    <property type="molecule type" value="Genomic_DNA"/>
</dbReference>
<dbReference type="EMBL" id="BT008682">
    <property type="protein sequence ID" value="AAP40489.1"/>
    <property type="status" value="ALT_INIT"/>
    <property type="molecule type" value="mRNA"/>
</dbReference>
<dbReference type="EMBL" id="AK229717">
    <property type="protein sequence ID" value="BAF01555.1"/>
    <property type="molecule type" value="mRNA"/>
</dbReference>
<dbReference type="PIR" id="T02534">
    <property type="entry name" value="T02534"/>
</dbReference>
<dbReference type="RefSeq" id="NP_001078018.1">
    <molecule id="Q8S4Q6-1"/>
    <property type="nucleotide sequence ID" value="NM_001084549.2"/>
</dbReference>
<dbReference type="RefSeq" id="NP_001323653.1">
    <molecule id="Q8S4Q6-3"/>
    <property type="nucleotide sequence ID" value="NM_001336669.1"/>
</dbReference>
<dbReference type="FunCoup" id="Q8S4Q6">
    <property type="interactions" value="36"/>
</dbReference>
<dbReference type="IntAct" id="Q8S4Q6">
    <property type="interactions" value="2"/>
</dbReference>
<dbReference type="STRING" id="3702.Q8S4Q6"/>
<dbReference type="iPTMnet" id="Q8S4Q6"/>
<dbReference type="PaxDb" id="3702-AT2G37678.1"/>
<dbReference type="ProteomicsDB" id="230592">
    <molecule id="Q8S4Q6-1"/>
</dbReference>
<dbReference type="EnsemblPlants" id="AT2G37678.1">
    <molecule id="Q8S4Q6-1"/>
    <property type="protein sequence ID" value="AT2G37678.1"/>
    <property type="gene ID" value="AT2G37678"/>
</dbReference>
<dbReference type="EnsemblPlants" id="AT2G37678.2">
    <molecule id="Q8S4Q6-3"/>
    <property type="protein sequence ID" value="AT2G37678.2"/>
    <property type="gene ID" value="AT2G37678"/>
</dbReference>
<dbReference type="GeneID" id="5007942"/>
<dbReference type="Gramene" id="AT2G37678.1">
    <molecule id="Q8S4Q6-1"/>
    <property type="protein sequence ID" value="AT2G37678.1"/>
    <property type="gene ID" value="AT2G37678"/>
</dbReference>
<dbReference type="Gramene" id="AT2G37678.2">
    <molecule id="Q8S4Q6-3"/>
    <property type="protein sequence ID" value="AT2G37678.2"/>
    <property type="gene ID" value="AT2G37678"/>
</dbReference>
<dbReference type="KEGG" id="ath:AT2G37678"/>
<dbReference type="Araport" id="AT2G37678"/>
<dbReference type="TAIR" id="AT2G37678">
    <property type="gene designation" value="FHY1"/>
</dbReference>
<dbReference type="eggNOG" id="KOG4635">
    <property type="taxonomic scope" value="Eukaryota"/>
</dbReference>
<dbReference type="HOGENOM" id="CLU_1565045_0_0_1"/>
<dbReference type="InParanoid" id="Q8S4Q6"/>
<dbReference type="OMA" id="LDFIYGS"/>
<dbReference type="OrthoDB" id="1930763at2759"/>
<dbReference type="PhylomeDB" id="Q8S4Q6"/>
<dbReference type="PRO" id="PR:Q8S4Q6"/>
<dbReference type="Proteomes" id="UP000006548">
    <property type="component" value="Chromosome 2"/>
</dbReference>
<dbReference type="ExpressionAtlas" id="Q8S4Q6">
    <property type="expression patterns" value="baseline and differential"/>
</dbReference>
<dbReference type="GO" id="GO:0005737">
    <property type="term" value="C:cytoplasm"/>
    <property type="evidence" value="ECO:0000314"/>
    <property type="project" value="UniProtKB"/>
</dbReference>
<dbReference type="GO" id="GO:0016604">
    <property type="term" value="C:nuclear body"/>
    <property type="evidence" value="ECO:0000314"/>
    <property type="project" value="UniProtKB"/>
</dbReference>
<dbReference type="GO" id="GO:0005634">
    <property type="term" value="C:nucleus"/>
    <property type="evidence" value="ECO:0000314"/>
    <property type="project" value="UniProtKB"/>
</dbReference>
<dbReference type="GO" id="GO:0061608">
    <property type="term" value="F:nuclear import signal receptor activity"/>
    <property type="evidence" value="ECO:0000314"/>
    <property type="project" value="TAIR"/>
</dbReference>
<dbReference type="GO" id="GO:0042803">
    <property type="term" value="F:protein homodimerization activity"/>
    <property type="evidence" value="ECO:0000314"/>
    <property type="project" value="UniProtKB"/>
</dbReference>
<dbReference type="GO" id="GO:0010018">
    <property type="term" value="P:far-red light signaling pathway"/>
    <property type="evidence" value="ECO:0000315"/>
    <property type="project" value="TAIR"/>
</dbReference>
<dbReference type="GO" id="GO:0051457">
    <property type="term" value="P:maintenance of protein location in nucleus"/>
    <property type="evidence" value="ECO:0000315"/>
    <property type="project" value="TAIR"/>
</dbReference>
<dbReference type="GO" id="GO:0009640">
    <property type="term" value="P:photomorphogenesis"/>
    <property type="evidence" value="ECO:0000315"/>
    <property type="project" value="TAIR"/>
</dbReference>
<dbReference type="GO" id="GO:0045893">
    <property type="term" value="P:positive regulation of DNA-templated transcription"/>
    <property type="evidence" value="ECO:0000314"/>
    <property type="project" value="UniProtKB"/>
</dbReference>
<dbReference type="GO" id="GO:1901000">
    <property type="term" value="P:regulation of response to salt stress"/>
    <property type="evidence" value="ECO:0000315"/>
    <property type="project" value="UniProtKB"/>
</dbReference>
<dbReference type="GO" id="GO:0010029">
    <property type="term" value="P:regulation of seed germination"/>
    <property type="evidence" value="ECO:0000315"/>
    <property type="project" value="UniProtKB"/>
</dbReference>
<dbReference type="GO" id="GO:0031048">
    <property type="term" value="P:regulatory ncRNA-mediated heterochromatin formation"/>
    <property type="evidence" value="ECO:0000314"/>
    <property type="project" value="UniProtKB"/>
</dbReference>
<dbReference type="GO" id="GO:0009646">
    <property type="term" value="P:response to absence of light"/>
    <property type="evidence" value="ECO:0000270"/>
    <property type="project" value="UniProtKB"/>
</dbReference>
<dbReference type="GO" id="GO:0010218">
    <property type="term" value="P:response to far red light"/>
    <property type="evidence" value="ECO:0000314"/>
    <property type="project" value="UniProtKB"/>
</dbReference>
<dbReference type="GO" id="GO:0009416">
    <property type="term" value="P:response to light stimulus"/>
    <property type="evidence" value="ECO:0000270"/>
    <property type="project" value="UniProtKB"/>
</dbReference>
<dbReference type="GO" id="GO:0010114">
    <property type="term" value="P:response to red light"/>
    <property type="evidence" value="ECO:0000315"/>
    <property type="project" value="UniProtKB"/>
</dbReference>
<dbReference type="GO" id="GO:0009639">
    <property type="term" value="P:response to red or far red light"/>
    <property type="evidence" value="ECO:0000315"/>
    <property type="project" value="TAIR"/>
</dbReference>
<dbReference type="InterPro" id="IPR037766">
    <property type="entry name" value="FHY1"/>
</dbReference>
<dbReference type="PANTHER" id="PTHR37723">
    <property type="entry name" value="PROTEIN FAR-RED ELONGATED HYPOCOTYL 1"/>
    <property type="match status" value="1"/>
</dbReference>
<dbReference type="PANTHER" id="PTHR37723:SF4">
    <property type="entry name" value="PROTEIN FAR-RED ELONGATED HYPOCOTYL 1"/>
    <property type="match status" value="1"/>
</dbReference>
<comment type="function">
    <text evidence="1 2 3 4 6 12 15 16 17 18 19">Key regulator of far red / red (FR/R) spectrum-specific responses essential for the adaption to changing light conditions (e.g. de-etiolation), essentially by regulating PHYA shuttling from the cytoplasm to the nucleus and by directly regulating the expression of some target genes, depending on light conditions and phosphorylation status (PubMed:22582101). Binds chromatin at target genes promoters, especially in FR light conditions (PubMed:25071219). Can activate transcription of different genes, some being in a phytochrome A (PHYA)-dependent and other in a PHYA-independent manners (PubMed:11726703, PubMed:15469493, PubMed:25071219). Controls specific aspects of plant development, such as the inhibition of seed germination under FR during salt stress (PubMed:25071219). Essential for light-regulated PHYA nuclear accumulation and subsequent PHYA phototropic signaling processes involved in photomorphogenesis (PubMed:17566111, PubMed:19482971, PubMed:21969386, PubMed:22374392, PubMed:25071219). Mediates the association of PHYA with HFR1 and LAF1 in the nucleus in response to FR conditions (PubMed:19482971). PHYA-specific signal transducer in response to continuous FR lights (PubMed:11711433, PubMed:11726703, PubMed:15469493, PubMed:16045472, PubMed:19482971, PubMed:8364355). Contributes to inhibition of hypocotyl elongation in continuous blue light (B) (PubMed:16045472).</text>
</comment>
<comment type="subunit">
    <text evidence="4 9 11 12 14">Homodimer and heterodimer with FHL (PubMed:16045472). Interacts with underphosphorylated PHYA, especially upon far-red (FR) light illumination (PubMed:18722184, PubMed:19208901, PubMed:19482971, PubMed:21884939). Binds to LAF1 and HFR1. Forms PHYA/FHY1/HFR1 complex in darkness but dissociates from PHYA and HFR1 in response to continuous FR light (FRc) (PubMed:19482971).</text>
</comment>
<comment type="interaction">
    <interactant intactId="EBI-1163379">
        <id>Q8S4Q6</id>
    </interactant>
    <interactant intactId="EBI-624446">
        <id>P14712</id>
        <label>PHYA</label>
    </interactant>
    <organismsDiffer>false</organismsDiffer>
    <experiments>4</experiments>
</comment>
<comment type="subcellular location">
    <subcellularLocation>
        <location evidence="1 2 8 10 14 17">Nucleus</location>
    </subcellularLocation>
    <subcellularLocation>
        <location evidence="1 2 10 14 17">Cytoplasm</location>
    </subcellularLocation>
    <text evidence="1 10 14 17">In hypocotyls, mostly present in nucleus of dark (cD) grown plants, but also detected at low levels in cytoplasm of cD and continuous far red (cFR) grown plants. Disappearance of the nuclear pool after exposition of etiolated plants to the light is faster in red (R), blue (B) and white light (WL) than in FR (PubMed:11711433). Shuttles reversibly from cytoplasm to nuclear bodies when dephosphorylated in FR but stay in the cytoplasm when phosphorylated by PHYA in other light conditions (PubMed:18980642, PubMed:21884939, PubMed:22582101).</text>
</comment>
<comment type="alternative products">
    <event type="alternative splicing"/>
    <isoform>
        <id>Q8S4Q6-1</id>
        <name>1</name>
        <name evidence="22">FHY1-3</name>
        <sequence type="displayed"/>
    </isoform>
    <isoform>
        <id>Q8S4Q6-2</id>
        <name>2</name>
        <name evidence="22">FHY1-1</name>
        <sequence type="described" ref="VSP_058415"/>
    </isoform>
    <isoform>
        <id>Q8S4Q6-3</id>
        <name>3</name>
        <name evidence="22">FHY1-2</name>
        <sequence type="described" ref="VSP_058416 VSP_058417"/>
    </isoform>
</comment>
<comment type="tissue specificity">
    <text evidence="1 2">Expressed in hypocotyl cells of etiolated plants.</text>
</comment>
<comment type="developmental stage">
    <text evidence="2 5">Accumulates in young seedlings with a peak three days after seed germination (PubMed:11726703). Mostly abundant in young seedlings grown in darkness, but quickly down-regulated during further seedling development and by light exposure (at protein level) (PubMed:16244150).</text>
</comment>
<comment type="induction">
    <text evidence="1 2 3 4 5 7 11 13 17">Activated by FHY3 and FAR1 under far-red light (FR); HY5 prevents this activation (PubMed:16045472, PubMed:18033885, PubMed:21097709). Down-regulated by FR, red (R) and blue (B) lights (PubMed:16045472, PubMed:18033885). Accumulates in dark (D)-grown but not in R and FR-grown hypocotyl cells. Repressed in etiolated plants transferred to FR conditions in a FHY3-dependent manner (PubMed:11711433, PubMed:15469493). Inhibited by light (PubMed:11726703). Repressed by PHYA-mediated phosphorylation in R illumination; the phosphorylated form is a substrate for ubiquitin/proteasome-mediated degradation (PubMed:19208901, PubMed:22582101). PHYA-dependent down-regulation by light is largely at post-transcriptional level, primarily mediated through the 26S proteasome-dependent protein degradation (PubMed:16244150).</text>
</comment>
<comment type="PTM">
    <text evidence="11 17">Inactivated by rapid reversible PHYA-mediated phosphorylation at Ser-39 and Thr-61 in red light (R), thus inhibiting PHYA signaling in a negative feedback loop; this ensures the seedling deetiolation process in response to a R-enriched light condition (PubMed:19208901, PubMed:22582101). Subsequent exposure to far-red light (FR) after the R conditions leads to dephosphorylation (PubMed:19208901). The phosphorylated form is cytoplasmic only and unable to bind to chromatin at direct target genes whereas the unphosphorylated form can shuttle from cytoplasm to nucleus (PubMed:22582101).</text>
</comment>
<comment type="disruption phenotype">
    <text evidence="1 2 3 4 6 12 16 17 18 19">Partially blind to far-red (FR) (PubMed:11711433, PubMed:11726703, PubMed:15469493, PubMed:16045472, PubMed:19482971). Impaired inhibition of hypocotyl elongation and cotyledons expansion under continuous FR light conditions (PubMed:11711433, PubMed:11726703, PubMed:16045472, PubMed:19482971, PubMed:22582101, PubMed:8364355). Absence of FR-induced killing response (PubMed:11726703). Increased seed germination rate in salt stress conditions (PubMed:25071219). In plants lacking FHY1 and FHL, altered phototropism (e.g. phototropic bending) associated with abnormal consitutive cytosolic localization of PHYA (PubMed:17566111, PubMed:22374392). In the double mutant fhl fhy1 several PHYA-dependent phototropic responses are altered (e.g. hypocotyl elongation and cotyledon opening under high-irradiance conditions and seed germination under very-low-fluence conditions), but not for some PHYA-dependent responses such as the abrogation of negative gravitropism in blue light and red-enhanced phototropism (PubMed:17566111). Hyposensitivity to blue light (B) (PubMed:16045472).</text>
</comment>
<comment type="similarity">
    <text evidence="23">Belongs to the FHY1 protein family.</text>
</comment>
<comment type="sequence caution" evidence="23">
    <conflict type="erroneous gene model prediction">
        <sequence resource="EMBL-CDS" id="AAC23638"/>
    </conflict>
</comment>
<comment type="sequence caution" evidence="23">
    <conflict type="erroneous initiation">
        <sequence resource="EMBL-CDS" id="AAP40489"/>
    </conflict>
    <text>Extended N-terminus.</text>
</comment>
<proteinExistence type="evidence at protein level"/>
<name>FHY1_ARATH</name>
<feature type="chain" id="PRO_0000436754" description="Protein FAR-RED ELONGATED HYPOCOTYL 1">
    <location>
        <begin position="1"/>
        <end position="202"/>
    </location>
</feature>
<feature type="short sequence motif" description="Nuclear localization sequence (NLS)" evidence="3 8 20">
    <location>
        <begin position="40"/>
        <end position="43"/>
    </location>
</feature>
<feature type="short sequence motif" description="Nuclear export sequence (NES)" evidence="3">
    <location>
        <begin position="54"/>
        <end position="57"/>
    </location>
</feature>
<feature type="modified residue" description="Phosphoserine" evidence="17">
    <location>
        <position position="39"/>
    </location>
</feature>
<feature type="modified residue" description="Phosphothreonine" evidence="17">
    <location>
        <position position="61"/>
    </location>
</feature>
<feature type="splice variant" id="VSP_058415" description="In isoform 2.">
    <location>
        <begin position="1"/>
        <end position="21"/>
    </location>
</feature>
<feature type="splice variant" id="VSP_058416" description="In isoform 3.">
    <original>DDSTLHET</original>
    <variation>GKENRILV</variation>
    <location>
        <begin position="177"/>
        <end position="184"/>
    </location>
</feature>
<feature type="splice variant" id="VSP_058417" description="In isoform 3.">
    <location>
        <begin position="185"/>
        <end position="202"/>
    </location>
</feature>
<feature type="mutagenesis site" description="Normal red light induced phosphorylation." evidence="17">
    <original>S</original>
    <variation>A</variation>
    <location>
        <position position="14"/>
    </location>
</feature>
<feature type="mutagenesis site" description="Reduced red light (R) induced phosphorylation. Abnormal persistent nuclear localization after R and far red illumination; when associated with A-61." evidence="17">
    <original>S</original>
    <variation>A</variation>
    <location>
        <position position="39"/>
    </location>
</feature>
<feature type="mutagenesis site" description="Phosphorylation mimic mutant unable to respond to far red light (FR) and to fulfill associated FR responses thus leading to very long hypocotyl, altered anthocyanin accumulation and closed cotyledons, abnormal constitutive subcellular localization in cytoplasm and impaired chromatin binding at direct target genes; when associated with D-61." evidence="17">
    <original>S</original>
    <variation>D</variation>
    <location>
        <position position="39"/>
    </location>
</feature>
<feature type="mutagenesis site" description="Normal red light induced phosphorylation." evidence="17">
    <original>S</original>
    <variation>A</variation>
    <location>
        <position position="49"/>
    </location>
</feature>
<feature type="mutagenesis site" description="Impaired red light induced phosphorylation. Abnormal persistent nuclear localization after R and far red illumination; when associated with A-39." evidence="17">
    <original>T</original>
    <variation>A</variation>
    <location>
        <position position="61"/>
    </location>
</feature>
<feature type="mutagenesis site" description="Phosphorylation mimic mutant unable to respond to far red light (FR) and to fulfill associated FR responses thus leading to very long hypocotyl, altered anthocyanin accumulation and closed cotyledons, abnormal constitutive subcellular localization in cytoplasm and impaired chromatin binding at direct target genes; when associated with S-39." evidence="17">
    <original>T</original>
    <variation>D</variation>
    <location>
        <position position="61"/>
    </location>
</feature>
<feature type="sequence conflict" description="In Ref. 1; AAL35819." evidence="23" ref="1">
    <original>V</original>
    <variation>M</variation>
    <location>
        <position position="38"/>
    </location>
</feature>
<feature type="sequence conflict" description="In Ref. 1; AAL35819." evidence="23" ref="1">
    <original>A</original>
    <variation>V</variation>
    <location>
        <position position="155"/>
    </location>
</feature>
<sequence length="202" mass="23013">MPEVEVDNNNEKPSEINSFHHMIISSSKNVLKMEEVEVSKKRKFQTDQSDELSLLPLSKHTCFANVACSENTNGNSEIDTEYSMSSYVNSTTSMECNNDIEMKEESSGSCGEDKMISFESHLDYIYGTQNLEDFSEKVIENILYLDEQEEEEEDAKGCSSNAAKFVLSSGRWTVNQDDSTLHETKKPTIDQEFEQYFSTLML</sequence>
<evidence type="ECO:0000269" key="1">
    <source>
    </source>
</evidence>
<evidence type="ECO:0000269" key="2">
    <source>
    </source>
</evidence>
<evidence type="ECO:0000269" key="3">
    <source>
    </source>
</evidence>
<evidence type="ECO:0000269" key="4">
    <source>
    </source>
</evidence>
<evidence type="ECO:0000269" key="5">
    <source>
    </source>
</evidence>
<evidence type="ECO:0000269" key="6">
    <source>
    </source>
</evidence>
<evidence type="ECO:0000269" key="7">
    <source>
    </source>
</evidence>
<evidence type="ECO:0000269" key="8">
    <source>
    </source>
</evidence>
<evidence type="ECO:0000269" key="9">
    <source>
    </source>
</evidence>
<evidence type="ECO:0000269" key="10">
    <source>
    </source>
</evidence>
<evidence type="ECO:0000269" key="11">
    <source>
    </source>
</evidence>
<evidence type="ECO:0000269" key="12">
    <source>
    </source>
</evidence>
<evidence type="ECO:0000269" key="13">
    <source>
    </source>
</evidence>
<evidence type="ECO:0000269" key="14">
    <source>
    </source>
</evidence>
<evidence type="ECO:0000269" key="15">
    <source>
    </source>
</evidence>
<evidence type="ECO:0000269" key="16">
    <source>
    </source>
</evidence>
<evidence type="ECO:0000269" key="17">
    <source>
    </source>
</evidence>
<evidence type="ECO:0000269" key="18">
    <source>
    </source>
</evidence>
<evidence type="ECO:0000269" key="19">
    <source>
    </source>
</evidence>
<evidence type="ECO:0000303" key="20">
    <source>
    </source>
</evidence>
<evidence type="ECO:0000303" key="21">
    <source>
    </source>
</evidence>
<evidence type="ECO:0000303" key="22">
    <source>
    </source>
</evidence>
<evidence type="ECO:0000305" key="23"/>
<evidence type="ECO:0000312" key="24">
    <source>
        <dbReference type="Araport" id="AT2G37678"/>
    </source>
</evidence>
<keyword id="KW-0010">Activator</keyword>
<keyword id="KW-0025">Alternative splicing</keyword>
<keyword id="KW-0963">Cytoplasm</keyword>
<keyword id="KW-0217">Developmental protein</keyword>
<keyword id="KW-0539">Nucleus</keyword>
<keyword id="KW-0597">Phosphoprotein</keyword>
<keyword id="KW-1185">Reference proteome</keyword>
<keyword id="KW-0804">Transcription</keyword>
<keyword id="KW-0805">Transcription regulation</keyword>
<protein>
    <recommendedName>
        <fullName evidence="20">Protein FAR-RED ELONGATED HYPOCOTYL 1</fullName>
    </recommendedName>
    <alternativeName>
        <fullName evidence="21">Protein PHYTOCHROME A SIGNAL TRANSDUCTION 3</fullName>
    </alternativeName>
</protein>
<accession>Q8S4Q6</accession>
<accession>D5MAD1</accession>
<accession>D5MAD2</accession>
<accession>O80936</accession>
<accession>Q7Y200</accession>
<accession>Q8W565</accession>
<organism>
    <name type="scientific">Arabidopsis thaliana</name>
    <name type="common">Mouse-ear cress</name>
    <dbReference type="NCBI Taxonomy" id="3702"/>
    <lineage>
        <taxon>Eukaryota</taxon>
        <taxon>Viridiplantae</taxon>
        <taxon>Streptophyta</taxon>
        <taxon>Embryophyta</taxon>
        <taxon>Tracheophyta</taxon>
        <taxon>Spermatophyta</taxon>
        <taxon>Magnoliopsida</taxon>
        <taxon>eudicotyledons</taxon>
        <taxon>Gunneridae</taxon>
        <taxon>Pentapetalae</taxon>
        <taxon>rosids</taxon>
        <taxon>malvids</taxon>
        <taxon>Brassicales</taxon>
        <taxon>Brassicaceae</taxon>
        <taxon>Camelineae</taxon>
        <taxon>Arabidopsis</taxon>
    </lineage>
</organism>